<proteinExistence type="inferred from homology"/>
<name>FADB_PSEF5</name>
<accession>Q4KFC4</accession>
<keyword id="KW-0276">Fatty acid metabolism</keyword>
<keyword id="KW-0413">Isomerase</keyword>
<keyword id="KW-0442">Lipid degradation</keyword>
<keyword id="KW-0443">Lipid metabolism</keyword>
<keyword id="KW-0456">Lyase</keyword>
<keyword id="KW-0511">Multifunctional enzyme</keyword>
<keyword id="KW-0520">NAD</keyword>
<keyword id="KW-0560">Oxidoreductase</keyword>
<comment type="function">
    <text evidence="1">Involved in the aerobic and anaerobic degradation of long-chain fatty acids via beta-oxidation cycle. Catalyzes the formation of 3-oxoacyl-CoA from enoyl-CoA via L-3-hydroxyacyl-CoA. It can also use D-3-hydroxyacyl-CoA and cis-3-enoyl-CoA as substrate.</text>
</comment>
<comment type="catalytic activity">
    <reaction evidence="1">
        <text>a (3S)-3-hydroxyacyl-CoA + NAD(+) = a 3-oxoacyl-CoA + NADH + H(+)</text>
        <dbReference type="Rhea" id="RHEA:22432"/>
        <dbReference type="ChEBI" id="CHEBI:15378"/>
        <dbReference type="ChEBI" id="CHEBI:57318"/>
        <dbReference type="ChEBI" id="CHEBI:57540"/>
        <dbReference type="ChEBI" id="CHEBI:57945"/>
        <dbReference type="ChEBI" id="CHEBI:90726"/>
        <dbReference type="EC" id="1.1.1.35"/>
    </reaction>
</comment>
<comment type="catalytic activity">
    <reaction evidence="1">
        <text>a (3S)-3-hydroxyacyl-CoA = a (2E)-enoyl-CoA + H2O</text>
        <dbReference type="Rhea" id="RHEA:16105"/>
        <dbReference type="ChEBI" id="CHEBI:15377"/>
        <dbReference type="ChEBI" id="CHEBI:57318"/>
        <dbReference type="ChEBI" id="CHEBI:58856"/>
        <dbReference type="EC" id="4.2.1.17"/>
    </reaction>
</comment>
<comment type="catalytic activity">
    <reaction evidence="1">
        <text>a 4-saturated-(3S)-3-hydroxyacyl-CoA = a (3E)-enoyl-CoA + H2O</text>
        <dbReference type="Rhea" id="RHEA:20724"/>
        <dbReference type="ChEBI" id="CHEBI:15377"/>
        <dbReference type="ChEBI" id="CHEBI:58521"/>
        <dbReference type="ChEBI" id="CHEBI:137480"/>
        <dbReference type="EC" id="4.2.1.17"/>
    </reaction>
</comment>
<comment type="catalytic activity">
    <reaction evidence="1">
        <text>(3S)-3-hydroxybutanoyl-CoA = (3R)-3-hydroxybutanoyl-CoA</text>
        <dbReference type="Rhea" id="RHEA:21760"/>
        <dbReference type="ChEBI" id="CHEBI:57315"/>
        <dbReference type="ChEBI" id="CHEBI:57316"/>
        <dbReference type="EC" id="5.1.2.3"/>
    </reaction>
</comment>
<comment type="catalytic activity">
    <reaction evidence="1">
        <text>a (3Z)-enoyl-CoA = a 4-saturated (2E)-enoyl-CoA</text>
        <dbReference type="Rhea" id="RHEA:45900"/>
        <dbReference type="ChEBI" id="CHEBI:85097"/>
        <dbReference type="ChEBI" id="CHEBI:85489"/>
        <dbReference type="EC" id="5.3.3.8"/>
    </reaction>
</comment>
<comment type="catalytic activity">
    <reaction evidence="1">
        <text>a (3E)-enoyl-CoA = a 4-saturated (2E)-enoyl-CoA</text>
        <dbReference type="Rhea" id="RHEA:45228"/>
        <dbReference type="ChEBI" id="CHEBI:58521"/>
        <dbReference type="ChEBI" id="CHEBI:85097"/>
        <dbReference type="EC" id="5.3.3.8"/>
    </reaction>
</comment>
<comment type="pathway">
    <text evidence="1">Lipid metabolism; fatty acid beta-oxidation.</text>
</comment>
<comment type="subunit">
    <text evidence="1">Heterotetramer of two alpha chains (FadB) and two beta chains (FadA).</text>
</comment>
<comment type="similarity">
    <text evidence="1">In the N-terminal section; belongs to the enoyl-CoA hydratase/isomerase family.</text>
</comment>
<comment type="similarity">
    <text evidence="1">In the C-terminal section; belongs to the 3-hydroxyacyl-CoA dehydrogenase family.</text>
</comment>
<evidence type="ECO:0000255" key="1">
    <source>
        <dbReference type="HAMAP-Rule" id="MF_01621"/>
    </source>
</evidence>
<reference key="1">
    <citation type="journal article" date="2005" name="Nat. Biotechnol.">
        <title>Complete genome sequence of the plant commensal Pseudomonas fluorescens Pf-5.</title>
        <authorList>
            <person name="Paulsen I.T."/>
            <person name="Press C.M."/>
            <person name="Ravel J."/>
            <person name="Kobayashi D.Y."/>
            <person name="Myers G.S.A."/>
            <person name="Mavrodi D.V."/>
            <person name="DeBoy R.T."/>
            <person name="Seshadri R."/>
            <person name="Ren Q."/>
            <person name="Madupu R."/>
            <person name="Dodson R.J."/>
            <person name="Durkin A.S."/>
            <person name="Brinkac L.M."/>
            <person name="Daugherty S.C."/>
            <person name="Sullivan S.A."/>
            <person name="Rosovitz M.J."/>
            <person name="Gwinn M.L."/>
            <person name="Zhou L."/>
            <person name="Schneider D.J."/>
            <person name="Cartinhour S.W."/>
            <person name="Nelson W.C."/>
            <person name="Weidman J."/>
            <person name="Watkins K."/>
            <person name="Tran K."/>
            <person name="Khouri H."/>
            <person name="Pierson E.A."/>
            <person name="Pierson L.S. III"/>
            <person name="Thomashow L.S."/>
            <person name="Loper J.E."/>
        </authorList>
    </citation>
    <scope>NUCLEOTIDE SEQUENCE [LARGE SCALE GENOMIC DNA]</scope>
    <source>
        <strain>ATCC BAA-477 / NRRL B-23932 / Pf-5</strain>
    </source>
</reference>
<gene>
    <name evidence="1" type="primary">fadB</name>
    <name type="ordered locus">PFL_1940</name>
</gene>
<protein>
    <recommendedName>
        <fullName evidence="1">Fatty acid oxidation complex subunit alpha</fullName>
    </recommendedName>
    <domain>
        <recommendedName>
            <fullName evidence="1">Enoyl-CoA hydratase/Delta(3)-cis-Delta(2)-trans-enoyl-CoA isomerase/3-hydroxybutyryl-CoA epimerase</fullName>
            <ecNumber evidence="1">4.2.1.17</ecNumber>
            <ecNumber evidence="1">5.1.2.3</ecNumber>
            <ecNumber evidence="1">5.3.3.8</ecNumber>
        </recommendedName>
    </domain>
    <domain>
        <recommendedName>
            <fullName evidence="1">3-hydroxyacyl-CoA dehydrogenase</fullName>
            <ecNumber evidence="1">1.1.1.35</ecNumber>
        </recommendedName>
    </domain>
</protein>
<dbReference type="EC" id="4.2.1.17" evidence="1"/>
<dbReference type="EC" id="5.1.2.3" evidence="1"/>
<dbReference type="EC" id="5.3.3.8" evidence="1"/>
<dbReference type="EC" id="1.1.1.35" evidence="1"/>
<dbReference type="EMBL" id="CP000076">
    <property type="protein sequence ID" value="AAY91227.1"/>
    <property type="molecule type" value="Genomic_DNA"/>
</dbReference>
<dbReference type="RefSeq" id="WP_011060260.1">
    <property type="nucleotide sequence ID" value="NC_004129.6"/>
</dbReference>
<dbReference type="SMR" id="Q4KFC4"/>
<dbReference type="STRING" id="220664.PFL_1940"/>
<dbReference type="GeneID" id="57474984"/>
<dbReference type="KEGG" id="pfl:PFL_1940"/>
<dbReference type="PATRIC" id="fig|220664.5.peg.1979"/>
<dbReference type="eggNOG" id="COG1024">
    <property type="taxonomic scope" value="Bacteria"/>
</dbReference>
<dbReference type="eggNOG" id="COG1250">
    <property type="taxonomic scope" value="Bacteria"/>
</dbReference>
<dbReference type="HOGENOM" id="CLU_009834_16_3_6"/>
<dbReference type="UniPathway" id="UPA00659"/>
<dbReference type="Proteomes" id="UP000008540">
    <property type="component" value="Chromosome"/>
</dbReference>
<dbReference type="GO" id="GO:0036125">
    <property type="term" value="C:fatty acid beta-oxidation multienzyme complex"/>
    <property type="evidence" value="ECO:0007669"/>
    <property type="project" value="InterPro"/>
</dbReference>
<dbReference type="GO" id="GO:0008692">
    <property type="term" value="F:3-hydroxybutyryl-CoA epimerase activity"/>
    <property type="evidence" value="ECO:0007669"/>
    <property type="project" value="UniProtKB-UniRule"/>
</dbReference>
<dbReference type="GO" id="GO:0004165">
    <property type="term" value="F:delta(3)-delta(2)-enoyl-CoA isomerase activity"/>
    <property type="evidence" value="ECO:0007669"/>
    <property type="project" value="UniProtKB-UniRule"/>
</dbReference>
<dbReference type="GO" id="GO:0004300">
    <property type="term" value="F:enoyl-CoA hydratase activity"/>
    <property type="evidence" value="ECO:0007669"/>
    <property type="project" value="UniProtKB-UniRule"/>
</dbReference>
<dbReference type="GO" id="GO:0016509">
    <property type="term" value="F:long-chain-3-hydroxyacyl-CoA dehydrogenase activity"/>
    <property type="evidence" value="ECO:0007669"/>
    <property type="project" value="TreeGrafter"/>
</dbReference>
<dbReference type="GO" id="GO:0070403">
    <property type="term" value="F:NAD+ binding"/>
    <property type="evidence" value="ECO:0007669"/>
    <property type="project" value="InterPro"/>
</dbReference>
<dbReference type="GO" id="GO:0006635">
    <property type="term" value="P:fatty acid beta-oxidation"/>
    <property type="evidence" value="ECO:0007669"/>
    <property type="project" value="UniProtKB-UniRule"/>
</dbReference>
<dbReference type="CDD" id="cd06558">
    <property type="entry name" value="crotonase-like"/>
    <property type="match status" value="1"/>
</dbReference>
<dbReference type="FunFam" id="1.10.1040.50:FF:000001">
    <property type="entry name" value="Fatty acid oxidation complex subunit alpha"/>
    <property type="match status" value="1"/>
</dbReference>
<dbReference type="FunFam" id="3.90.226.10:FF:000018">
    <property type="entry name" value="Fatty acid oxidation complex subunit alpha"/>
    <property type="match status" value="1"/>
</dbReference>
<dbReference type="FunFam" id="3.40.50.720:FF:000009">
    <property type="entry name" value="Fatty oxidation complex, alpha subunit"/>
    <property type="match status" value="1"/>
</dbReference>
<dbReference type="Gene3D" id="1.10.1040.50">
    <property type="match status" value="1"/>
</dbReference>
<dbReference type="Gene3D" id="3.90.226.10">
    <property type="entry name" value="2-enoyl-CoA Hydratase, Chain A, domain 1"/>
    <property type="match status" value="1"/>
</dbReference>
<dbReference type="Gene3D" id="3.40.50.720">
    <property type="entry name" value="NAD(P)-binding Rossmann-like Domain"/>
    <property type="match status" value="1"/>
</dbReference>
<dbReference type="HAMAP" id="MF_01621">
    <property type="entry name" value="FadB"/>
    <property type="match status" value="1"/>
</dbReference>
<dbReference type="InterPro" id="IPR006180">
    <property type="entry name" value="3-OHacyl-CoA_DH_CS"/>
</dbReference>
<dbReference type="InterPro" id="IPR006176">
    <property type="entry name" value="3-OHacyl-CoA_DH_NAD-bd"/>
</dbReference>
<dbReference type="InterPro" id="IPR006108">
    <property type="entry name" value="3HC_DH_C"/>
</dbReference>
<dbReference type="InterPro" id="IPR008927">
    <property type="entry name" value="6-PGluconate_DH-like_C_sf"/>
</dbReference>
<dbReference type="InterPro" id="IPR029045">
    <property type="entry name" value="ClpP/crotonase-like_dom_sf"/>
</dbReference>
<dbReference type="InterPro" id="IPR018376">
    <property type="entry name" value="Enoyl-CoA_hyd/isom_CS"/>
</dbReference>
<dbReference type="InterPro" id="IPR001753">
    <property type="entry name" value="Enoyl-CoA_hydra/iso"/>
</dbReference>
<dbReference type="InterPro" id="IPR050136">
    <property type="entry name" value="FA_oxidation_alpha_subunit"/>
</dbReference>
<dbReference type="InterPro" id="IPR012799">
    <property type="entry name" value="FadB"/>
</dbReference>
<dbReference type="InterPro" id="IPR036291">
    <property type="entry name" value="NAD(P)-bd_dom_sf"/>
</dbReference>
<dbReference type="NCBIfam" id="TIGR02437">
    <property type="entry name" value="FadB"/>
    <property type="match status" value="1"/>
</dbReference>
<dbReference type="NCBIfam" id="NF008727">
    <property type="entry name" value="PRK11730.1"/>
    <property type="match status" value="1"/>
</dbReference>
<dbReference type="PANTHER" id="PTHR43612">
    <property type="entry name" value="TRIFUNCTIONAL ENZYME SUBUNIT ALPHA"/>
    <property type="match status" value="1"/>
</dbReference>
<dbReference type="PANTHER" id="PTHR43612:SF3">
    <property type="entry name" value="TRIFUNCTIONAL ENZYME SUBUNIT ALPHA, MITOCHONDRIAL"/>
    <property type="match status" value="1"/>
</dbReference>
<dbReference type="Pfam" id="PF00725">
    <property type="entry name" value="3HCDH"/>
    <property type="match status" value="1"/>
</dbReference>
<dbReference type="Pfam" id="PF02737">
    <property type="entry name" value="3HCDH_N"/>
    <property type="match status" value="1"/>
</dbReference>
<dbReference type="Pfam" id="PF00378">
    <property type="entry name" value="ECH_1"/>
    <property type="match status" value="1"/>
</dbReference>
<dbReference type="SUPFAM" id="SSF48179">
    <property type="entry name" value="6-phosphogluconate dehydrogenase C-terminal domain-like"/>
    <property type="match status" value="2"/>
</dbReference>
<dbReference type="SUPFAM" id="SSF52096">
    <property type="entry name" value="ClpP/crotonase"/>
    <property type="match status" value="1"/>
</dbReference>
<dbReference type="SUPFAM" id="SSF51735">
    <property type="entry name" value="NAD(P)-binding Rossmann-fold domains"/>
    <property type="match status" value="1"/>
</dbReference>
<dbReference type="PROSITE" id="PS00067">
    <property type="entry name" value="3HCDH"/>
    <property type="match status" value="1"/>
</dbReference>
<dbReference type="PROSITE" id="PS00166">
    <property type="entry name" value="ENOYL_COA_HYDRATASE"/>
    <property type="match status" value="1"/>
</dbReference>
<feature type="chain" id="PRO_0000109275" description="Fatty acid oxidation complex subunit alpha">
    <location>
        <begin position="1"/>
        <end position="715"/>
    </location>
</feature>
<feature type="region of interest" description="Enoyl-CoA hydratase/isomerase" evidence="1">
    <location>
        <begin position="1"/>
        <end position="190"/>
    </location>
</feature>
<feature type="region of interest" description="3-hydroxyacyl-CoA dehydrogenase" evidence="1">
    <location>
        <begin position="312"/>
        <end position="715"/>
    </location>
</feature>
<feature type="active site" description="For 3-hydroxyacyl-CoA dehydrogenase activity" evidence="1">
    <location>
        <position position="451"/>
    </location>
</feature>
<feature type="binding site" evidence="1">
    <location>
        <position position="297"/>
    </location>
    <ligand>
        <name>substrate</name>
    </ligand>
</feature>
<feature type="binding site" evidence="1">
    <location>
        <position position="325"/>
    </location>
    <ligand>
        <name>NAD(+)</name>
        <dbReference type="ChEBI" id="CHEBI:57540"/>
    </ligand>
</feature>
<feature type="binding site" evidence="1">
    <location>
        <position position="344"/>
    </location>
    <ligand>
        <name>NAD(+)</name>
        <dbReference type="ChEBI" id="CHEBI:57540"/>
    </ligand>
</feature>
<feature type="binding site" evidence="1">
    <location>
        <begin position="401"/>
        <end position="403"/>
    </location>
    <ligand>
        <name>NAD(+)</name>
        <dbReference type="ChEBI" id="CHEBI:57540"/>
    </ligand>
</feature>
<feature type="binding site" evidence="1">
    <location>
        <position position="408"/>
    </location>
    <ligand>
        <name>NAD(+)</name>
        <dbReference type="ChEBI" id="CHEBI:57540"/>
    </ligand>
</feature>
<feature type="binding site" evidence="1">
    <location>
        <position position="430"/>
    </location>
    <ligand>
        <name>NAD(+)</name>
        <dbReference type="ChEBI" id="CHEBI:57540"/>
    </ligand>
</feature>
<feature type="binding site" evidence="1">
    <location>
        <position position="454"/>
    </location>
    <ligand>
        <name>NAD(+)</name>
        <dbReference type="ChEBI" id="CHEBI:57540"/>
    </ligand>
</feature>
<feature type="binding site" evidence="1">
    <location>
        <position position="501"/>
    </location>
    <ligand>
        <name>substrate</name>
    </ligand>
</feature>
<feature type="binding site" evidence="1">
    <location>
        <position position="660"/>
    </location>
    <ligand>
        <name>substrate</name>
    </ligand>
</feature>
<feature type="site" description="Important for catalytic activity" evidence="1">
    <location>
        <position position="120"/>
    </location>
</feature>
<feature type="site" description="Important for catalytic activity" evidence="1">
    <location>
        <position position="140"/>
    </location>
</feature>
<sequence length="715" mass="77124">MIYEGKAITVKALESGIVELNFDLKGESVNKFNRLTLNELRQAVDTIKADASIKGVIVSSGKDVFIVGADITEFVDNFKLPDAELVAGNLEANKIFSDFEDLNVPTVAAINGIALGGGLEMCLAADYRVMAASAKIGLPEVKLGIYPGFGGTVRLPRLIGADNAIEWIAAGKENRAEDALKVGAVDAVVAPDKLKDAALALVKRAISGEFDYKAKRQPKLEKLKLNAIEQMMAFETAKGFVAGQAGPNYPAPVEAIKTIQKAANFGRDKALEVEAAGFVKLAKTSAAQSLIGLFLNDQELKKKAKAYDEIAKDVKQAAVLGAGIMGGGIAYQSASKGTPILMKDINEHGIEQGLAEAAKLLVGRVDKGRMTAAKMAEVLNGIRPTLSYGDFGNVDLVVEAVVENPKVKQIVLAEVEGQVKEDTILASNTSTISISLLAKALKRPENFVGMHFFNPVHMMPLVEVIRGEKSSELAVATTVAYAKKMGKNPIVVNDCPGFLVNRVLFPYFGGFAKLVSAGVDFVRIDKIMEKFGWPMGPAYLMDVVGIDTGHHGRDVMAEGFPDRMKDDRRSAVDVLYEAKRLGQKNGKGFYAYETDKKGKQKKVADPSVLEVLKPIVYEQREVTDEDIINWMMIPLCLETVRCLEDGIVETAAEADMGLVYGIGFPPFRGGALRYIDSIGVAEFVALADQYADLGALYHPTAKLREMAKNGQSFFG</sequence>
<organism>
    <name type="scientific">Pseudomonas fluorescens (strain ATCC BAA-477 / NRRL B-23932 / Pf-5)</name>
    <dbReference type="NCBI Taxonomy" id="220664"/>
    <lineage>
        <taxon>Bacteria</taxon>
        <taxon>Pseudomonadati</taxon>
        <taxon>Pseudomonadota</taxon>
        <taxon>Gammaproteobacteria</taxon>
        <taxon>Pseudomonadales</taxon>
        <taxon>Pseudomonadaceae</taxon>
        <taxon>Pseudomonas</taxon>
    </lineage>
</organism>